<accession>C5MCK5</accession>
<dbReference type="EMBL" id="GG692399">
    <property type="protein sequence ID" value="EER32285.1"/>
    <property type="molecule type" value="Genomic_DNA"/>
</dbReference>
<dbReference type="RefSeq" id="XP_002549659.1">
    <property type="nucleotide sequence ID" value="XM_002549613.1"/>
</dbReference>
<dbReference type="EnsemblFungi" id="CTRG_03956-t43_1">
    <property type="protein sequence ID" value="CTRG_03956-t43_1-p1"/>
    <property type="gene ID" value="CTRG_03956"/>
</dbReference>
<dbReference type="GeneID" id="8295804"/>
<dbReference type="KEGG" id="ctp:CTRG_03956"/>
<dbReference type="VEuPathDB" id="FungiDB:CTRG_03956"/>
<dbReference type="eggNOG" id="ENOG502R2ZP">
    <property type="taxonomic scope" value="Eukaryota"/>
</dbReference>
<dbReference type="HOGENOM" id="CLU_010748_2_2_1"/>
<dbReference type="OrthoDB" id="2538135at2759"/>
<dbReference type="Proteomes" id="UP000002037">
    <property type="component" value="Unassembled WGS sequence"/>
</dbReference>
<dbReference type="GO" id="GO:0005634">
    <property type="term" value="C:nucleus"/>
    <property type="evidence" value="ECO:0007669"/>
    <property type="project" value="UniProtKB-SubCell"/>
</dbReference>
<dbReference type="GO" id="GO:0000981">
    <property type="term" value="F:DNA-binding transcription factor activity, RNA polymerase II-specific"/>
    <property type="evidence" value="ECO:0007669"/>
    <property type="project" value="InterPro"/>
</dbReference>
<dbReference type="GO" id="GO:0000977">
    <property type="term" value="F:RNA polymerase II transcription regulatory region sequence-specific DNA binding"/>
    <property type="evidence" value="ECO:0007669"/>
    <property type="project" value="TreeGrafter"/>
</dbReference>
<dbReference type="GO" id="GO:0008270">
    <property type="term" value="F:zinc ion binding"/>
    <property type="evidence" value="ECO:0007669"/>
    <property type="project" value="InterPro"/>
</dbReference>
<dbReference type="GO" id="GO:0009267">
    <property type="term" value="P:cellular response to starvation"/>
    <property type="evidence" value="ECO:0007669"/>
    <property type="project" value="TreeGrafter"/>
</dbReference>
<dbReference type="CDD" id="cd00067">
    <property type="entry name" value="GAL4"/>
    <property type="match status" value="1"/>
</dbReference>
<dbReference type="CDD" id="cd00130">
    <property type="entry name" value="PAS"/>
    <property type="match status" value="1"/>
</dbReference>
<dbReference type="Gene3D" id="4.10.240.10">
    <property type="entry name" value="Zn(2)-C6 fungal-type DNA-binding domain"/>
    <property type="match status" value="1"/>
</dbReference>
<dbReference type="InterPro" id="IPR050335">
    <property type="entry name" value="ERT1_acuK_gluconeogen_tf"/>
</dbReference>
<dbReference type="InterPro" id="IPR000014">
    <property type="entry name" value="PAS"/>
</dbReference>
<dbReference type="InterPro" id="IPR035965">
    <property type="entry name" value="PAS-like_dom_sf"/>
</dbReference>
<dbReference type="InterPro" id="IPR056751">
    <property type="entry name" value="PAS_13"/>
</dbReference>
<dbReference type="InterPro" id="IPR036864">
    <property type="entry name" value="Zn2-C6_fun-type_DNA-bd_sf"/>
</dbReference>
<dbReference type="InterPro" id="IPR001138">
    <property type="entry name" value="Zn2Cys6_DnaBD"/>
</dbReference>
<dbReference type="PANTHER" id="PTHR47659:SF8">
    <property type="entry name" value="GLUCOSE STARVATION MODULATOR PROTEIN 1"/>
    <property type="match status" value="1"/>
</dbReference>
<dbReference type="PANTHER" id="PTHR47659">
    <property type="entry name" value="ZN(II)2CYS6 TRANSCRIPTION FACTOR (EUROFUNG)-RELATED"/>
    <property type="match status" value="1"/>
</dbReference>
<dbReference type="Pfam" id="PF24990">
    <property type="entry name" value="PAS_13"/>
    <property type="match status" value="2"/>
</dbReference>
<dbReference type="Pfam" id="PF00172">
    <property type="entry name" value="Zn_clus"/>
    <property type="match status" value="1"/>
</dbReference>
<dbReference type="SMART" id="SM00066">
    <property type="entry name" value="GAL4"/>
    <property type="match status" value="1"/>
</dbReference>
<dbReference type="SMART" id="SM00091">
    <property type="entry name" value="PAS"/>
    <property type="match status" value="1"/>
</dbReference>
<dbReference type="SUPFAM" id="SSF55785">
    <property type="entry name" value="PYP-like sensor domain (PAS domain)"/>
    <property type="match status" value="1"/>
</dbReference>
<dbReference type="SUPFAM" id="SSF57701">
    <property type="entry name" value="Zn2/Cys6 DNA-binding domain"/>
    <property type="match status" value="1"/>
</dbReference>
<dbReference type="PROSITE" id="PS50112">
    <property type="entry name" value="PAS"/>
    <property type="match status" value="1"/>
</dbReference>
<dbReference type="PROSITE" id="PS00463">
    <property type="entry name" value="ZN2_CY6_FUNGAL_1"/>
    <property type="match status" value="1"/>
</dbReference>
<dbReference type="PROSITE" id="PS50048">
    <property type="entry name" value="ZN2_CY6_FUNGAL_2"/>
    <property type="match status" value="1"/>
</dbReference>
<evidence type="ECO:0000250" key="1"/>
<evidence type="ECO:0000255" key="2">
    <source>
        <dbReference type="PROSITE-ProRule" id="PRU00140"/>
    </source>
</evidence>
<evidence type="ECO:0000255" key="3">
    <source>
        <dbReference type="PROSITE-ProRule" id="PRU00227"/>
    </source>
</evidence>
<evidence type="ECO:0000256" key="4">
    <source>
        <dbReference type="SAM" id="MobiDB-lite"/>
    </source>
</evidence>
<evidence type="ECO:0000305" key="5"/>
<protein>
    <recommendedName>
        <fullName>Glucose starvation modulator protein 1</fullName>
    </recommendedName>
</protein>
<comment type="function">
    <text evidence="1">Transcription factor which regulates nonfermentable carbon utilization.</text>
</comment>
<comment type="subcellular location">
    <subcellularLocation>
        <location evidence="3">Nucleus</location>
    </subcellularLocation>
</comment>
<comment type="similarity">
    <text evidence="5">Belongs to the ERT1/acuK family.</text>
</comment>
<feature type="chain" id="PRO_0000406483" description="Glucose starvation modulator protein 1">
    <location>
        <begin position="1"/>
        <end position="589"/>
    </location>
</feature>
<feature type="domain" description="PAS" evidence="2">
    <location>
        <begin position="471"/>
        <end position="542"/>
    </location>
</feature>
<feature type="DNA-binding region" description="Zn(2)-C6 fungal-type" evidence="3">
    <location>
        <begin position="20"/>
        <end position="48"/>
    </location>
</feature>
<feature type="region of interest" description="Disordered" evidence="4">
    <location>
        <begin position="59"/>
        <end position="90"/>
    </location>
</feature>
<feature type="region of interest" description="Disordered" evidence="4">
    <location>
        <begin position="218"/>
        <end position="240"/>
    </location>
</feature>
<feature type="region of interest" description="Disordered" evidence="4">
    <location>
        <begin position="340"/>
        <end position="362"/>
    </location>
</feature>
<feature type="compositionally biased region" description="Polar residues" evidence="4">
    <location>
        <begin position="80"/>
        <end position="90"/>
    </location>
</feature>
<feature type="compositionally biased region" description="Basic and acidic residues" evidence="4">
    <location>
        <begin position="347"/>
        <end position="357"/>
    </location>
</feature>
<keyword id="KW-0238">DNA-binding</keyword>
<keyword id="KW-0479">Metal-binding</keyword>
<keyword id="KW-0539">Nucleus</keyword>
<keyword id="KW-1185">Reference proteome</keyword>
<keyword id="KW-0804">Transcription</keyword>
<keyword id="KW-0805">Transcription regulation</keyword>
<keyword id="KW-0862">Zinc</keyword>
<gene>
    <name type="primary">GSM1</name>
    <name type="ORF">CTRG_03956</name>
</gene>
<organism>
    <name type="scientific">Candida tropicalis (strain ATCC MYA-3404 / T1)</name>
    <name type="common">Yeast</name>
    <dbReference type="NCBI Taxonomy" id="294747"/>
    <lineage>
        <taxon>Eukaryota</taxon>
        <taxon>Fungi</taxon>
        <taxon>Dikarya</taxon>
        <taxon>Ascomycota</taxon>
        <taxon>Saccharomycotina</taxon>
        <taxon>Pichiomycetes</taxon>
        <taxon>Debaryomycetaceae</taxon>
        <taxon>Candida/Lodderomyces clade</taxon>
        <taxon>Candida</taxon>
    </lineage>
</organism>
<name>GSM1_CANTT</name>
<sequence>MTKKLTPQEKQNRKPAVRACVFCHQKHLQCSNERPCKNCVKRNIGHECRDIVRKRVQYLTGNGKGSSSKTKTPRKKLKSTPITASSPSVASTISPLPIDAGLKQEFSTPNEIPMSEPSLTNQPLSMSPLNPQGANNITNNFNSHATSQQIKEILEVPPHVNSMMNNSGLNTNVSLTPETLMIPDHLQFHTTTMLNTTNDVLNKLLTDQFETESLISANNSNNTSHNDNFIAQNNNNNPEPSNLHNRHQFSSNYLNEEYLMLGDILLHSKPVSPSPSNTSASEYNTNTLSPTNFGFIQNIDFEGFNQPKKKVAKKLKESRPFISLGYTDDSTLRLNHAPEANGQTEDLLDHNKDDSRKNPGNGNSIINFETKYVKDYVAPFITNGLYQSVKDIYSYQIINYEYPDSYHALTKFLKERFGGNDLSIDERKEKRSKLLVILKLIASYRPTFIAAHKSLLKPQDLLFLEMSLQRSLLDYKKLVELSSSPSIMWRRTGEIIYITEEMGLLLGYSPIEILEKRFFLFSLMPDEEIIRYFKFFKNIAVNDLQSSISIKVKLINKEGRLVEFCSVYTIKRDIFDIPMLIVGQFLPVM</sequence>
<reference key="1">
    <citation type="journal article" date="2009" name="Nature">
        <title>Evolution of pathogenicity and sexual reproduction in eight Candida genomes.</title>
        <authorList>
            <person name="Butler G."/>
            <person name="Rasmussen M.D."/>
            <person name="Lin M.F."/>
            <person name="Santos M.A.S."/>
            <person name="Sakthikumar S."/>
            <person name="Munro C.A."/>
            <person name="Rheinbay E."/>
            <person name="Grabherr M."/>
            <person name="Forche A."/>
            <person name="Reedy J.L."/>
            <person name="Agrafioti I."/>
            <person name="Arnaud M.B."/>
            <person name="Bates S."/>
            <person name="Brown A.J.P."/>
            <person name="Brunke S."/>
            <person name="Costanzo M.C."/>
            <person name="Fitzpatrick D.A."/>
            <person name="de Groot P.W.J."/>
            <person name="Harris D."/>
            <person name="Hoyer L.L."/>
            <person name="Hube B."/>
            <person name="Klis F.M."/>
            <person name="Kodira C."/>
            <person name="Lennard N."/>
            <person name="Logue M.E."/>
            <person name="Martin R."/>
            <person name="Neiman A.M."/>
            <person name="Nikolaou E."/>
            <person name="Quail M.A."/>
            <person name="Quinn J."/>
            <person name="Santos M.C."/>
            <person name="Schmitzberger F.F."/>
            <person name="Sherlock G."/>
            <person name="Shah P."/>
            <person name="Silverstein K.A.T."/>
            <person name="Skrzypek M.S."/>
            <person name="Soll D."/>
            <person name="Staggs R."/>
            <person name="Stansfield I."/>
            <person name="Stumpf M.P.H."/>
            <person name="Sudbery P.E."/>
            <person name="Srikantha T."/>
            <person name="Zeng Q."/>
            <person name="Berman J."/>
            <person name="Berriman M."/>
            <person name="Heitman J."/>
            <person name="Gow N.A.R."/>
            <person name="Lorenz M.C."/>
            <person name="Birren B.W."/>
            <person name="Kellis M."/>
            <person name="Cuomo C.A."/>
        </authorList>
    </citation>
    <scope>NUCLEOTIDE SEQUENCE [LARGE SCALE GENOMIC DNA]</scope>
    <source>
        <strain>ATCC MYA-3404 / T1</strain>
    </source>
</reference>
<proteinExistence type="inferred from homology"/>